<keyword id="KW-0687">Ribonucleoprotein</keyword>
<keyword id="KW-0689">Ribosomal protein</keyword>
<keyword id="KW-0694">RNA-binding</keyword>
<keyword id="KW-0699">rRNA-binding</keyword>
<protein>
    <recommendedName>
        <fullName evidence="1">Large ribosomal subunit protein uL24</fullName>
    </recommendedName>
    <alternativeName>
        <fullName evidence="2">50S ribosomal protein L24</fullName>
    </alternativeName>
</protein>
<name>RL24_ACIB3</name>
<reference key="1">
    <citation type="journal article" date="2008" name="J. Bacteriol.">
        <title>Comparative genome sequence analysis of multidrug-resistant Acinetobacter baumannii.</title>
        <authorList>
            <person name="Adams M.D."/>
            <person name="Goglin K."/>
            <person name="Molyneaux N."/>
            <person name="Hujer K.M."/>
            <person name="Lavender H."/>
            <person name="Jamison J.J."/>
            <person name="MacDonald I.J."/>
            <person name="Martin K.M."/>
            <person name="Russo T."/>
            <person name="Campagnari A.A."/>
            <person name="Hujer A.M."/>
            <person name="Bonomo R.A."/>
            <person name="Gill S.R."/>
        </authorList>
    </citation>
    <scope>NUCLEOTIDE SEQUENCE [LARGE SCALE GENOMIC DNA]</scope>
    <source>
        <strain>AB307-0294</strain>
    </source>
</reference>
<sequence>MAKIKKGDQVIVIAGKEKGKQGTVLSVSEDRVKVEGLNLVKKHQKPNRVTGAEGGIVTQEASLHISNVAILNATTQKADRVGYQVIDGVKTRVYKSTGESVAVAK</sequence>
<accession>B7GW13</accession>
<organism>
    <name type="scientific">Acinetobacter baumannii (strain AB307-0294)</name>
    <dbReference type="NCBI Taxonomy" id="557600"/>
    <lineage>
        <taxon>Bacteria</taxon>
        <taxon>Pseudomonadati</taxon>
        <taxon>Pseudomonadota</taxon>
        <taxon>Gammaproteobacteria</taxon>
        <taxon>Moraxellales</taxon>
        <taxon>Moraxellaceae</taxon>
        <taxon>Acinetobacter</taxon>
        <taxon>Acinetobacter calcoaceticus/baumannii complex</taxon>
    </lineage>
</organism>
<proteinExistence type="inferred from homology"/>
<dbReference type="EMBL" id="CP001172">
    <property type="protein sequence ID" value="ACJ58915.1"/>
    <property type="molecule type" value="Genomic_DNA"/>
</dbReference>
<dbReference type="RefSeq" id="WP_001062685.1">
    <property type="nucleotide sequence ID" value="NZ_CP001172.1"/>
</dbReference>
<dbReference type="SMR" id="B7GW13"/>
<dbReference type="GeneID" id="92895306"/>
<dbReference type="HOGENOM" id="CLU_093315_2_2_6"/>
<dbReference type="Proteomes" id="UP000006924">
    <property type="component" value="Chromosome"/>
</dbReference>
<dbReference type="GO" id="GO:1990904">
    <property type="term" value="C:ribonucleoprotein complex"/>
    <property type="evidence" value="ECO:0007669"/>
    <property type="project" value="UniProtKB-KW"/>
</dbReference>
<dbReference type="GO" id="GO:0005840">
    <property type="term" value="C:ribosome"/>
    <property type="evidence" value="ECO:0007669"/>
    <property type="project" value="UniProtKB-KW"/>
</dbReference>
<dbReference type="GO" id="GO:0019843">
    <property type="term" value="F:rRNA binding"/>
    <property type="evidence" value="ECO:0007669"/>
    <property type="project" value="UniProtKB-UniRule"/>
</dbReference>
<dbReference type="GO" id="GO:0003735">
    <property type="term" value="F:structural constituent of ribosome"/>
    <property type="evidence" value="ECO:0007669"/>
    <property type="project" value="InterPro"/>
</dbReference>
<dbReference type="GO" id="GO:0006412">
    <property type="term" value="P:translation"/>
    <property type="evidence" value="ECO:0007669"/>
    <property type="project" value="UniProtKB-UniRule"/>
</dbReference>
<dbReference type="CDD" id="cd06089">
    <property type="entry name" value="KOW_RPL26"/>
    <property type="match status" value="1"/>
</dbReference>
<dbReference type="FunFam" id="2.30.30.30:FF:000004">
    <property type="entry name" value="50S ribosomal protein L24"/>
    <property type="match status" value="1"/>
</dbReference>
<dbReference type="Gene3D" id="2.30.30.30">
    <property type="match status" value="1"/>
</dbReference>
<dbReference type="HAMAP" id="MF_01326_B">
    <property type="entry name" value="Ribosomal_uL24_B"/>
    <property type="match status" value="1"/>
</dbReference>
<dbReference type="InterPro" id="IPR005824">
    <property type="entry name" value="KOW"/>
</dbReference>
<dbReference type="InterPro" id="IPR014722">
    <property type="entry name" value="Rib_uL2_dom2"/>
</dbReference>
<dbReference type="InterPro" id="IPR003256">
    <property type="entry name" value="Ribosomal_uL24"/>
</dbReference>
<dbReference type="InterPro" id="IPR005825">
    <property type="entry name" value="Ribosomal_uL24_CS"/>
</dbReference>
<dbReference type="InterPro" id="IPR041988">
    <property type="entry name" value="Ribosomal_uL24_KOW"/>
</dbReference>
<dbReference type="InterPro" id="IPR008991">
    <property type="entry name" value="Translation_prot_SH3-like_sf"/>
</dbReference>
<dbReference type="NCBIfam" id="TIGR01079">
    <property type="entry name" value="rplX_bact"/>
    <property type="match status" value="1"/>
</dbReference>
<dbReference type="PANTHER" id="PTHR12903">
    <property type="entry name" value="MITOCHONDRIAL RIBOSOMAL PROTEIN L24"/>
    <property type="match status" value="1"/>
</dbReference>
<dbReference type="Pfam" id="PF00467">
    <property type="entry name" value="KOW"/>
    <property type="match status" value="1"/>
</dbReference>
<dbReference type="Pfam" id="PF17136">
    <property type="entry name" value="ribosomal_L24"/>
    <property type="match status" value="1"/>
</dbReference>
<dbReference type="SMART" id="SM00739">
    <property type="entry name" value="KOW"/>
    <property type="match status" value="1"/>
</dbReference>
<dbReference type="SUPFAM" id="SSF50104">
    <property type="entry name" value="Translation proteins SH3-like domain"/>
    <property type="match status" value="1"/>
</dbReference>
<dbReference type="PROSITE" id="PS01108">
    <property type="entry name" value="RIBOSOMAL_L24"/>
    <property type="match status" value="1"/>
</dbReference>
<feature type="chain" id="PRO_1000141948" description="Large ribosomal subunit protein uL24">
    <location>
        <begin position="1"/>
        <end position="105"/>
    </location>
</feature>
<evidence type="ECO:0000255" key="1">
    <source>
        <dbReference type="HAMAP-Rule" id="MF_01326"/>
    </source>
</evidence>
<evidence type="ECO:0000305" key="2"/>
<comment type="function">
    <text evidence="1">One of two assembly initiator proteins, it binds directly to the 5'-end of the 23S rRNA, where it nucleates assembly of the 50S subunit.</text>
</comment>
<comment type="function">
    <text evidence="1">One of the proteins that surrounds the polypeptide exit tunnel on the outside of the subunit.</text>
</comment>
<comment type="subunit">
    <text evidence="1">Part of the 50S ribosomal subunit.</text>
</comment>
<comment type="similarity">
    <text evidence="1">Belongs to the universal ribosomal protein uL24 family.</text>
</comment>
<gene>
    <name evidence="1" type="primary">rplX</name>
    <name type="ordered locus">ABBFA_000443</name>
</gene>